<proteinExistence type="evidence at protein level"/>
<sequence>MQHQIRALLLFLLSGSACAMFYPRPKDYPRLGKRSFFTTVNGNHYPRIGRRDATGSSLVLPEADYTDLGDLTKRGVFTQGAHGSYPRVGRGGAVLSRDYLNERSKNLEKMSGDKDDDLEVDNGDGSRRLQAGHSGIPLEILFIAYDSDNDGKLSKEEFVTGLAQYQMQCPLY</sequence>
<keyword id="KW-0027">Amidation</keyword>
<keyword id="KW-0106">Calcium</keyword>
<keyword id="KW-0165">Cleavage on pair of basic residues</keyword>
<keyword id="KW-0963">Cytoplasm</keyword>
<keyword id="KW-0968">Cytoplasmic vesicle</keyword>
<keyword id="KW-0256">Endoplasmic reticulum</keyword>
<keyword id="KW-0479">Metal-binding</keyword>
<keyword id="KW-0527">Neuropeptide</keyword>
<keyword id="KW-0732">Signal</keyword>
<organism evidence="13">
    <name type="scientific">Helix lucorum</name>
    <name type="common">Snail</name>
    <dbReference type="NCBI Taxonomy" id="31229"/>
    <lineage>
        <taxon>Eukaryota</taxon>
        <taxon>Metazoa</taxon>
        <taxon>Spiralia</taxon>
        <taxon>Lophotrochozoa</taxon>
        <taxon>Mollusca</taxon>
        <taxon>Gastropoda</taxon>
        <taxon>Heterobranchia</taxon>
        <taxon>Euthyneura</taxon>
        <taxon>Panpulmonata</taxon>
        <taxon>Eupulmonata</taxon>
        <taxon>Stylommatophora</taxon>
        <taxon>Helicina</taxon>
        <taxon>Helicoidea</taxon>
        <taxon>Helicidae</taxon>
        <taxon>Helix</taxon>
    </lineage>
</organism>
<protein>
    <recommendedName>
        <fullName evidence="11">HCS2 neuropeptides</fullName>
    </recommendedName>
    <alternativeName>
        <fullName evidence="11">CNP neuropeptides</fullName>
    </alternativeName>
    <alternativeName>
        <fullName evidence="10">Command neuron-specific peptides</fullName>
    </alternativeName>
    <component>
        <recommendedName>
            <fullName evidence="10">Peptide CNP1</fullName>
        </recommendedName>
        <alternativeName>
            <fullName evidence="10">CNP1</fullName>
        </alternativeName>
    </component>
    <component>
        <recommendedName>
            <fullName evidence="10">Peptide CNP2</fullName>
        </recommendedName>
        <alternativeName>
            <fullName evidence="10">CNP2</fullName>
        </alternativeName>
        <alternativeName>
            <fullName evidence="9">DYPRLamide</fullName>
        </alternativeName>
    </component>
    <component>
        <recommendedName>
            <fullName evidence="10">Peptide CNP3</fullName>
        </recommendedName>
        <alternativeName>
            <fullName evidence="10">CNP3</fullName>
        </alternativeName>
    </component>
    <component>
        <recommendedName>
            <fullName evidence="10">Peptide CNP4</fullName>
        </recommendedName>
        <alternativeName>
            <fullName evidence="10">CNP4</fullName>
        </alternativeName>
    </component>
</protein>
<reference evidence="13" key="1">
    <citation type="journal article" date="1998" name="Neuroscience">
        <title>Putative neuropeptides and an EF-hand motif region are encoded by a novel gene expressed in the four giant interneurons of the terrestrial snail.</title>
        <authorList>
            <person name="Bogdanov Y.D."/>
            <person name="Balaban P.M."/>
            <person name="Poteryaev D.A."/>
            <person name="Zakharov I.S."/>
            <person name="Belyavsky A.V."/>
        </authorList>
    </citation>
    <scope>NUCLEOTIDE SEQUENCE [MRNA]</scope>
    <scope>SYNTHESIS OF CNP1; CNP2; CNP3 AND CNP4</scope>
    <scope>FUNCTION</scope>
    <scope>TISSUE SPECIFICITY</scope>
    <scope>DEVELOPMENTAL STAGE</scope>
    <scope>PROBABLE AMIDATION AT LEU-31; ILE-48 AND VAL-88</scope>
    <source>
        <tissue evidence="13">Neural ganglion</tissue>
    </source>
</reference>
<reference evidence="11" key="2">
    <citation type="journal article" date="2001" name="Neuroscience">
        <title>Up- and down-regulation of Helix command-specific 2 (HCS2) gene expression in the nervous system of terrestrial snail Helix lucorum.</title>
        <authorList>
            <person name="Balaban P.M."/>
            <person name="Poteryaev D.A."/>
            <person name="Zakharov I.S."/>
            <person name="Uvarov P."/>
            <person name="Malyshev A."/>
            <person name="Belyavsky A.V."/>
        </authorList>
    </citation>
    <scope>FUNCTION</scope>
    <scope>TISSUE SPECIFICITY</scope>
    <scope>INDUCTION</scope>
</reference>
<reference evidence="11" key="3">
    <citation type="journal article" date="2004" name="Mol. Biol. (Mosk.)">
        <title>Immunocytochemical study of the distribution of hcs2 gene products in Command Neurons of the Helix lucorum Snail.</title>
        <authorList>
            <person name="Ivanova J.L."/>
            <person name="Leonova O.G."/>
            <person name="Popenko V.I."/>
            <person name="Ierusalimskii V.N."/>
            <person name="Bogusalvskii D.V."/>
            <person name="Balaban P.M."/>
            <person name="Beliavskii A.V."/>
        </authorList>
    </citation>
    <scope>SUBCELLULAR LOCATION</scope>
    <scope>TISSUE SPECIFICITY</scope>
</reference>
<reference evidence="11" key="4">
    <citation type="journal article" date="2006" name="Neurosci. Behav. Physiol.">
        <title>Functions of peptide CNP4, encoded by the HCS2 gene, in the nervous system of Helix lucorum.</title>
        <authorList>
            <person name="Korshunova T.A."/>
            <person name="Malyshev A.Y."/>
            <person name="Zakharov I.S."/>
            <person name="Ierusalimskii V.N."/>
            <person name="Balaban P.M."/>
        </authorList>
    </citation>
    <scope>FUNCTION (CNP4)</scope>
    <scope>TISSUE SPECIFICITY</scope>
    <scope>SYNTHESIS OF CNP4</scope>
</reference>
<reference evidence="11" key="5">
    <citation type="journal article" date="2006" name="Cell. Mol. Neurobiol.">
        <title>Intracellular localization of the HCS2 gene products in identified snail neurons in vivo and in vitro.</title>
        <authorList>
            <person name="Ivanova J.L."/>
            <person name="Leonova O.G."/>
            <person name="Popenko V.I."/>
            <person name="Ierusalimsky V.N."/>
            <person name="Korshunova T.A."/>
            <person name="Boguslavsky D.V."/>
            <person name="Malyshev A.Y."/>
            <person name="Balaban P.M."/>
            <person name="Belyavsky A.V."/>
        </authorList>
    </citation>
    <scope>SUBCELLULAR LOCATION</scope>
    <scope>TISSUE SPECIFICITY</scope>
</reference>
<reference evidence="11" key="6">
    <citation type="journal article" date="2010" name="Peptides">
        <title>Morphology of neuropeptide CNP2 modulation of heart activity in terrestrial snail.</title>
        <authorList>
            <person name="Aseyev N."/>
            <person name="Zakharov I.S."/>
            <person name="Balaban P.M."/>
        </authorList>
    </citation>
    <scope>FUNCTION (CNP2)</scope>
    <scope>TISSUE SPECIFICITY (CNP2)</scope>
    <scope>SYNTHESIS OF CNP2</scope>
</reference>
<dbReference type="EMBL" id="X92111">
    <property type="protein sequence ID" value="CAA63082.1"/>
    <property type="molecule type" value="mRNA"/>
</dbReference>
<dbReference type="GO" id="GO:0044295">
    <property type="term" value="C:axonal growth cone"/>
    <property type="evidence" value="ECO:0000314"/>
    <property type="project" value="UniProtKB"/>
</dbReference>
<dbReference type="GO" id="GO:0005737">
    <property type="term" value="C:cytoplasm"/>
    <property type="evidence" value="ECO:0000314"/>
    <property type="project" value="UniProtKB"/>
</dbReference>
<dbReference type="GO" id="GO:0005783">
    <property type="term" value="C:endoplasmic reticulum"/>
    <property type="evidence" value="ECO:0007669"/>
    <property type="project" value="UniProtKB-SubCell"/>
</dbReference>
<dbReference type="GO" id="GO:0120111">
    <property type="term" value="C:neuron projection cytoplasm"/>
    <property type="evidence" value="ECO:0000314"/>
    <property type="project" value="UniProtKB"/>
</dbReference>
<dbReference type="GO" id="GO:0043025">
    <property type="term" value="C:neuronal cell body"/>
    <property type="evidence" value="ECO:0000314"/>
    <property type="project" value="UniProtKB"/>
</dbReference>
<dbReference type="GO" id="GO:0043204">
    <property type="term" value="C:perikaryon"/>
    <property type="evidence" value="ECO:0000314"/>
    <property type="project" value="UniProtKB"/>
</dbReference>
<dbReference type="GO" id="GO:0030141">
    <property type="term" value="C:secretory granule"/>
    <property type="evidence" value="ECO:0000314"/>
    <property type="project" value="UniProtKB"/>
</dbReference>
<dbReference type="GO" id="GO:0030133">
    <property type="term" value="C:transport vesicle"/>
    <property type="evidence" value="ECO:0007669"/>
    <property type="project" value="UniProtKB-SubCell"/>
</dbReference>
<dbReference type="GO" id="GO:0005509">
    <property type="term" value="F:calcium ion binding"/>
    <property type="evidence" value="ECO:0007669"/>
    <property type="project" value="InterPro"/>
</dbReference>
<dbReference type="GO" id="GO:0007218">
    <property type="term" value="P:neuropeptide signaling pathway"/>
    <property type="evidence" value="ECO:0007669"/>
    <property type="project" value="UniProtKB-KW"/>
</dbReference>
<dbReference type="Gene3D" id="1.10.238.10">
    <property type="entry name" value="EF-hand"/>
    <property type="match status" value="1"/>
</dbReference>
<dbReference type="InterPro" id="IPR011992">
    <property type="entry name" value="EF-hand-dom_pair"/>
</dbReference>
<dbReference type="InterPro" id="IPR018247">
    <property type="entry name" value="EF_Hand_1_Ca_BS"/>
</dbReference>
<dbReference type="InterPro" id="IPR002048">
    <property type="entry name" value="EF_hand_dom"/>
</dbReference>
<dbReference type="SUPFAM" id="SSF47473">
    <property type="entry name" value="EF-hand"/>
    <property type="match status" value="1"/>
</dbReference>
<dbReference type="PROSITE" id="PS00018">
    <property type="entry name" value="EF_HAND_1"/>
    <property type="match status" value="1"/>
</dbReference>
<dbReference type="PROSITE" id="PS50222">
    <property type="entry name" value="EF_HAND_2"/>
    <property type="match status" value="1"/>
</dbReference>
<accession>Q25077</accession>
<comment type="function">
    <text evidence="3 7 8">Neurotransmitter or neuromodulator peptides that mediate withdrawal behavior such as pneumostome activity in the respiratory system (PubMed:11246168, PubMed:9622259, Ref.3). Possibly regulates calcium levels in command premotor interneurons (PubMed:11246168, Ref.3).</text>
</comment>
<comment type="function">
    <molecule>Peptide CNP2</molecule>
    <text evidence="6 7">Involved in neural modulation of the cardiovascular system, in addition to or as part of, the peptide's role in mediating withdrawal behavior (PubMed:20399241, PubMed:9622259). Appears to have a function in both the ventricle and auricle chambers of the heart; the effects are both positively inotrophic, by affecting the magnitude of ventricle contractions, and positively chronotropic, by affecting the frequency of auricle contractions (PubMed:20399241). In vitro modulates the spontaneous activity rate of parietal command neurons on motoneurons from the visceral ganglions that control pneumostome closure (PubMed:9622259).</text>
</comment>
<comment type="function">
    <molecule>Peptide CNP3</molecule>
    <text evidence="7">Likely to function as a neurotransmitter or neuromodulator that mediates withdrawal behavior. In vitro modulates the spontaneous activity rate of parietal command neurons on motoneurons from the visceral ganglion that control pneumostome closure.</text>
</comment>
<comment type="function">
    <molecule>Peptide CNP4</molecule>
    <text evidence="4 7">Involved in neural modulation that mediates pneumostome movements in the respiratory system as part of the withdrawal response (PubMed:16465488, PubMed:9622259). In vitro elicits an increase in the rhythmic activity of pneumostome motoneurons, and increases the frequency and intensity of pneumostome movements (PubMed:16465488, PubMed:9622259). This suggests that this peptide, and possibly other HCS2 peptides, may be responsible for the 'delayed effect' influence of the command interneurons which consists of an intensification of respiratory movements (PubMed:16465488, PubMed:9622259). Also promotes the growth of neuron processes in cultured cells extracted from the pleural ganglia, and may therefore have a role in development and/or rearrangements of the defensive neural network (PubMed:16465488).</text>
</comment>
<comment type="subcellular location">
    <subcellularLocation>
        <location evidence="5 8">Cytoplasm</location>
    </subcellularLocation>
    <subcellularLocation>
        <location evidence="5 8">Cytoplasmic vesicle</location>
        <location evidence="5 8">Secretory vesicle</location>
    </subcellularLocation>
    <subcellularLocation>
        <location evidence="8">Perikaryon</location>
    </subcellularLocation>
    <subcellularLocation>
        <location evidence="5">Endoplasmic reticulum</location>
    </subcellularLocation>
    <text evidence="8">Occurs mainly on the granule surface (Ref.3). Present in the perikaryon of command neurons in the cytoplasm surrounding giant nuclei (Ref.3).</text>
</comment>
<comment type="subcellular location">
    <molecule>Peptide CNP3</molecule>
    <subcellularLocation>
        <location evidence="8">Cytoplasm</location>
    </subcellularLocation>
    <subcellularLocation>
        <location evidence="5 8">Cytoplasmic vesicle</location>
        <location evidence="5 8">Secretory vesicle</location>
    </subcellularLocation>
    <subcellularLocation>
        <location evidence="8">Perikaryon</location>
    </subcellularLocation>
    <text evidence="8">Occurs mainly within the granule.</text>
</comment>
<comment type="subcellular location">
    <molecule>Peptide CNP4</molecule>
    <subcellularLocation>
        <location evidence="8">Cytoplasm</location>
    </subcellularLocation>
    <subcellularLocation>
        <location evidence="8">Cytoplasmic vesicle</location>
        <location evidence="8">Secretory vesicle</location>
    </subcellularLocation>
    <subcellularLocation>
        <location evidence="8">Perikaryon</location>
    </subcellularLocation>
</comment>
<comment type="tissue specificity">
    <text evidence="3 4 5 6 7 8">Expressed in regions of the central nervous system that are known to control withdrawal behavior (PubMed:11246168, PubMed:16465488, PubMed:16763780, PubMed:9622259, Ref.3). Detected in the cell bodies and processes of the command interneurons (at protein level) (PubMed:16465488, PubMed:16763780, Ref.3). Predominately expressed in the LPa3/RPa3 and LW/RPa2 giant interneurons that are located in the parietal ganglia, as well as in other unidentified neurons in the pedal, pleural and cerebral ganglia (PubMed:11246168, PubMed:16763780, PubMed:9622259). Peptide CNP2: Detected in neural fibers that pass along the cardiorenal complex in the pericardium and arborize in adjacent connective tissue to innervate both the auricle, near the exit of the pulmonary vein, and the ventricle near the aorta (at protein level) (PubMed:20399241). The inner surface of the heart, ventricle neck region and aorta, are richly innervated with these neural fibers (at protein level) (PubMed:20399241). Also detected in large varicosities in the heart trabeculae and in the auriculoventricular region at the fiber terminals (at protein level) (PubMed:20399241). In the parieto-visceral ganglionic complex of the CNS, detected in a soma on the ventral caudal surface of the visceral ganglion and a soma located in the right parietal ganglion (at protein level) (PubMed:20399241). Peptide CNP3: Detected in the command interneurons (at protein level) (PubMed:16763780, Ref.3). Peptide CNP4: Detected in the cell bodies and processes of the command interneurons (at protein level) (PubMed:16465488, Ref.3).</text>
</comment>
<comment type="developmental stage">
    <text evidence="7">In embryos, not detected until 3 days before hatching when it is significantly expressed in the right but not in the left parietal giant interneurons. In juveniles under a month old, expression is higher in the right parietal giant interneurons compared to the left.</text>
</comment>
<comment type="induction">
    <text evidence="3">In isolated central nervous system neurons, up-regulated or down-regulated in the cerebral, parietal, pleural and pedal ganglia in response to different stimuli. Up-regulated in response to noxious input such as injury, as well as by the application of neurotransmitters and second messengers such as serotonin that are known to be involved in withdrawal behavior. Also up-regulated by thapsigargin which increases the intracellular free calcium concentration. Down-regulated by a decrease in synaptic activity in the nervous system induced by increased Mg(2+) concentration.</text>
</comment>
<evidence type="ECO:0000255" key="1"/>
<evidence type="ECO:0000255" key="2">
    <source>
        <dbReference type="PROSITE-ProRule" id="PRU00448"/>
    </source>
</evidence>
<evidence type="ECO:0000269" key="3">
    <source>
    </source>
</evidence>
<evidence type="ECO:0000269" key="4">
    <source>
    </source>
</evidence>
<evidence type="ECO:0000269" key="5">
    <source>
    </source>
</evidence>
<evidence type="ECO:0000269" key="6">
    <source>
    </source>
</evidence>
<evidence type="ECO:0000269" key="7">
    <source>
    </source>
</evidence>
<evidence type="ECO:0000269" key="8">
    <source ref="3"/>
</evidence>
<evidence type="ECO:0000303" key="9">
    <source>
    </source>
</evidence>
<evidence type="ECO:0000303" key="10">
    <source>
    </source>
</evidence>
<evidence type="ECO:0000305" key="11"/>
<evidence type="ECO:0000305" key="12">
    <source>
    </source>
</evidence>
<evidence type="ECO:0000312" key="13">
    <source>
        <dbReference type="EMBL" id="CAA63082.1"/>
    </source>
</evidence>
<feature type="signal peptide" evidence="1">
    <location>
        <begin position="1"/>
        <end position="19"/>
    </location>
</feature>
<feature type="chain" id="PRO_5004202478" description="HCS2 neuropeptides" evidence="1">
    <location>
        <begin position="20"/>
        <end position="172"/>
    </location>
</feature>
<feature type="peptide" id="PRO_0000445969" description="Peptide CNP1" evidence="7">
    <location>
        <begin position="20"/>
        <end position="25"/>
    </location>
</feature>
<feature type="peptide" id="PRO_0000445970" description="Peptide CNP2" evidence="7">
    <location>
        <begin position="27"/>
        <end position="31"/>
    </location>
</feature>
<feature type="peptide" id="PRO_0000445971" description="Peptide CNP3" evidence="7">
    <location>
        <begin position="35"/>
        <end position="48"/>
    </location>
</feature>
<feature type="peptide" id="PRO_0000445972" description="Peptide CNP4" evidence="7">
    <location>
        <begin position="75"/>
        <end position="88"/>
    </location>
</feature>
<feature type="domain" description="EF-hand" evidence="2">
    <location>
        <begin position="133"/>
        <end position="168"/>
    </location>
</feature>
<feature type="binding site" evidence="2">
    <location>
        <position position="146"/>
    </location>
    <ligand>
        <name>Ca(2+)</name>
        <dbReference type="ChEBI" id="CHEBI:29108"/>
    </ligand>
</feature>
<feature type="binding site" evidence="2">
    <location>
        <position position="148"/>
    </location>
    <ligand>
        <name>Ca(2+)</name>
        <dbReference type="ChEBI" id="CHEBI:29108"/>
    </ligand>
</feature>
<feature type="binding site" evidence="2">
    <location>
        <position position="150"/>
    </location>
    <ligand>
        <name>Ca(2+)</name>
        <dbReference type="ChEBI" id="CHEBI:29108"/>
    </ligand>
</feature>
<feature type="binding site" evidence="2">
    <location>
        <position position="152"/>
    </location>
    <ligand>
        <name>Ca(2+)</name>
        <dbReference type="ChEBI" id="CHEBI:29108"/>
    </ligand>
</feature>
<feature type="binding site" evidence="2">
    <location>
        <position position="157"/>
    </location>
    <ligand>
        <name>Ca(2+)</name>
        <dbReference type="ChEBI" id="CHEBI:29108"/>
    </ligand>
</feature>
<feature type="modified residue" description="Leucine amide" evidence="12">
    <location>
        <position position="31"/>
    </location>
</feature>
<feature type="modified residue" description="Isoleucine amide" evidence="12">
    <location>
        <position position="48"/>
    </location>
</feature>
<feature type="modified residue" description="Valine amide" evidence="12">
    <location>
        <position position="88"/>
    </location>
</feature>
<gene>
    <name evidence="10" type="primary">HCS2</name>
</gene>
<name>CNP_HELLU</name>